<accession>Q6NQK2</accession>
<accession>Q9C610</accession>
<accession>Q9C6M7</accession>
<dbReference type="EMBL" id="AC079281">
    <property type="protein sequence ID" value="AAG50802.1"/>
    <property type="status" value="ALT_SEQ"/>
    <property type="molecule type" value="Genomic_DNA"/>
</dbReference>
<dbReference type="EMBL" id="AC084221">
    <property type="protein sequence ID" value="AAG50527.1"/>
    <property type="status" value="ALT_SEQ"/>
    <property type="molecule type" value="Genomic_DNA"/>
</dbReference>
<dbReference type="EMBL" id="CP002684">
    <property type="protein sequence ID" value="AEE30644.1"/>
    <property type="molecule type" value="Genomic_DNA"/>
</dbReference>
<dbReference type="EMBL" id="BT010450">
    <property type="protein sequence ID" value="AAQ62870.1"/>
    <property type="molecule type" value="mRNA"/>
</dbReference>
<dbReference type="EMBL" id="AK221266">
    <property type="protein sequence ID" value="BAD93935.1"/>
    <property type="molecule type" value="mRNA"/>
</dbReference>
<dbReference type="EMBL" id="AK228316">
    <property type="protein sequence ID" value="BAF00259.1"/>
    <property type="molecule type" value="mRNA"/>
</dbReference>
<dbReference type="PIR" id="C86386">
    <property type="entry name" value="C86386"/>
</dbReference>
<dbReference type="RefSeq" id="NP_564238.2">
    <property type="nucleotide sequence ID" value="NM_102369.3"/>
</dbReference>
<dbReference type="SMR" id="Q6NQK2"/>
<dbReference type="BioGRID" id="24382">
    <property type="interactions" value="1"/>
</dbReference>
<dbReference type="FunCoup" id="Q6NQK2">
    <property type="interactions" value="2303"/>
</dbReference>
<dbReference type="STRING" id="3702.Q6NQK2"/>
<dbReference type="GlyGen" id="Q6NQK2">
    <property type="glycosylation" value="2 sites"/>
</dbReference>
<dbReference type="iPTMnet" id="Q6NQK2"/>
<dbReference type="PaxDb" id="3702-AT1G25580.1"/>
<dbReference type="ProteomicsDB" id="251239"/>
<dbReference type="EnsemblPlants" id="AT1G25580.1">
    <property type="protein sequence ID" value="AT1G25580.1"/>
    <property type="gene ID" value="AT1G25580"/>
</dbReference>
<dbReference type="GeneID" id="839145"/>
<dbReference type="Gramene" id="AT1G25580.1">
    <property type="protein sequence ID" value="AT1G25580.1"/>
    <property type="gene ID" value="AT1G25580"/>
</dbReference>
<dbReference type="KEGG" id="ath:AT1G25580"/>
<dbReference type="Araport" id="AT1G25580"/>
<dbReference type="TAIR" id="AT1G25580">
    <property type="gene designation" value="SOG1"/>
</dbReference>
<dbReference type="eggNOG" id="ENOG502QYVC">
    <property type="taxonomic scope" value="Eukaryota"/>
</dbReference>
<dbReference type="HOGENOM" id="CLU_025101_0_0_1"/>
<dbReference type="InParanoid" id="Q6NQK2"/>
<dbReference type="OMA" id="ACPRCNH"/>
<dbReference type="OrthoDB" id="1882130at2759"/>
<dbReference type="PhylomeDB" id="Q6NQK2"/>
<dbReference type="PRO" id="PR:Q6NQK2"/>
<dbReference type="Proteomes" id="UP000006548">
    <property type="component" value="Chromosome 1"/>
</dbReference>
<dbReference type="ExpressionAtlas" id="Q6NQK2">
    <property type="expression patterns" value="baseline and differential"/>
</dbReference>
<dbReference type="GO" id="GO:0005634">
    <property type="term" value="C:nucleus"/>
    <property type="evidence" value="ECO:0007669"/>
    <property type="project" value="UniProtKB-SubCell"/>
</dbReference>
<dbReference type="GO" id="GO:0003700">
    <property type="term" value="F:DNA-binding transcription factor activity"/>
    <property type="evidence" value="ECO:0000250"/>
    <property type="project" value="TAIR"/>
</dbReference>
<dbReference type="GO" id="GO:0000976">
    <property type="term" value="F:transcription cis-regulatory region binding"/>
    <property type="evidence" value="ECO:0000353"/>
    <property type="project" value="TAIR"/>
</dbReference>
<dbReference type="GO" id="GO:0000077">
    <property type="term" value="P:DNA damage checkpoint signaling"/>
    <property type="evidence" value="ECO:0000315"/>
    <property type="project" value="TAIR"/>
</dbReference>
<dbReference type="GO" id="GO:0040020">
    <property type="term" value="P:regulation of meiotic nuclear division"/>
    <property type="evidence" value="ECO:0000315"/>
    <property type="project" value="TAIR"/>
</dbReference>
<dbReference type="GO" id="GO:0010332">
    <property type="term" value="P:response to gamma radiation"/>
    <property type="evidence" value="ECO:0000315"/>
    <property type="project" value="TAIR"/>
</dbReference>
<dbReference type="FunFam" id="2.170.150.80:FF:000009">
    <property type="entry name" value="NAC domain-containing protein 8"/>
    <property type="match status" value="1"/>
</dbReference>
<dbReference type="Gene3D" id="2.170.150.80">
    <property type="entry name" value="NAC domain"/>
    <property type="match status" value="1"/>
</dbReference>
<dbReference type="InterPro" id="IPR003441">
    <property type="entry name" value="NAC-dom"/>
</dbReference>
<dbReference type="InterPro" id="IPR036093">
    <property type="entry name" value="NAC_dom_sf"/>
</dbReference>
<dbReference type="InterPro" id="IPR044799">
    <property type="entry name" value="SOG1-like"/>
</dbReference>
<dbReference type="PANTHER" id="PTHR31079">
    <property type="entry name" value="NAC DOMAIN-CONTAINING PROTEIN 73"/>
    <property type="match status" value="1"/>
</dbReference>
<dbReference type="PANTHER" id="PTHR31079:SF9">
    <property type="entry name" value="SUPPRESSOR OF GAMMA RESPONSE 1"/>
    <property type="match status" value="1"/>
</dbReference>
<dbReference type="Pfam" id="PF02365">
    <property type="entry name" value="NAM"/>
    <property type="match status" value="1"/>
</dbReference>
<dbReference type="SUPFAM" id="SSF101941">
    <property type="entry name" value="NAC domain"/>
    <property type="match status" value="1"/>
</dbReference>
<dbReference type="PROSITE" id="PS51005">
    <property type="entry name" value="NAC"/>
    <property type="match status" value="1"/>
</dbReference>
<feature type="chain" id="PRO_0000376616" description="SUPPRESSOR OF GAMMA RESPONSE 1">
    <location>
        <begin position="1"/>
        <end position="449"/>
    </location>
</feature>
<feature type="domain" description="NAC" evidence="1">
    <location>
        <begin position="58"/>
        <end position="211"/>
    </location>
</feature>
<feature type="DNA-binding region" evidence="1">
    <location>
        <begin position="167"/>
        <end position="217"/>
    </location>
</feature>
<feature type="region of interest" description="Disordered" evidence="2">
    <location>
        <begin position="324"/>
        <end position="348"/>
    </location>
</feature>
<feature type="compositionally biased region" description="Basic and acidic residues" evidence="2">
    <location>
        <begin position="324"/>
        <end position="336"/>
    </location>
</feature>
<feature type="mutagenesis site" description="In sog1-1; loss of rapid transcriptional response to gamma radiation." evidence="3">
    <original>G</original>
    <variation>R</variation>
    <location>
        <position position="155"/>
    </location>
</feature>
<feature type="mutagenesis site" description="Loss of hyperphosphorylation; when associated with A-356; A-372; A-430 and A-436." evidence="5">
    <original>S</original>
    <variation>A</variation>
    <location>
        <position position="350"/>
    </location>
</feature>
<feature type="mutagenesis site" description="Loss of hyperphosphorylation; when associated with A-350; A-372; A-430 and A-436." evidence="5">
    <original>S</original>
    <variation>A</variation>
    <location>
        <position position="356"/>
    </location>
</feature>
<feature type="mutagenesis site" description="Loss of hyperphosphorylation; when associated with A-350; A-356; A-430 and A-436." evidence="5">
    <original>S</original>
    <variation>A</variation>
    <location>
        <position position="372"/>
    </location>
</feature>
<feature type="mutagenesis site" description="Loss of hyperphosphorylation; when associated with A-356; A-372; A-430 and A-436." evidence="5">
    <original>S</original>
    <variation>A</variation>
    <location>
        <position position="430"/>
    </location>
</feature>
<feature type="mutagenesis site" description="Loss of hyperphosphorylation; when associated with A-356; A-372; A-430 and A-430." evidence="5">
    <original>S</original>
    <variation>A</variation>
    <location>
        <position position="436"/>
    </location>
</feature>
<organism>
    <name type="scientific">Arabidopsis thaliana</name>
    <name type="common">Mouse-ear cress</name>
    <dbReference type="NCBI Taxonomy" id="3702"/>
    <lineage>
        <taxon>Eukaryota</taxon>
        <taxon>Viridiplantae</taxon>
        <taxon>Streptophyta</taxon>
        <taxon>Embryophyta</taxon>
        <taxon>Tracheophyta</taxon>
        <taxon>Spermatophyta</taxon>
        <taxon>Magnoliopsida</taxon>
        <taxon>eudicotyledons</taxon>
        <taxon>Gunneridae</taxon>
        <taxon>Pentapetalae</taxon>
        <taxon>rosids</taxon>
        <taxon>malvids</taxon>
        <taxon>Brassicales</taxon>
        <taxon>Brassicaceae</taxon>
        <taxon>Camelineae</taxon>
        <taxon>Arabidopsis</taxon>
    </lineage>
</organism>
<gene>
    <name evidence="8" type="primary">SOG1</name>
    <name evidence="7" type="synonym">NAC008</name>
    <name evidence="11" type="ordered locus">At1g25580</name>
    <name evidence="12" type="ORF">F14G11.2</name>
    <name evidence="13" type="ORF">F2J7.1</name>
</gene>
<evidence type="ECO:0000255" key="1">
    <source>
        <dbReference type="PROSITE-ProRule" id="PRU00353"/>
    </source>
</evidence>
<evidence type="ECO:0000256" key="2">
    <source>
        <dbReference type="SAM" id="MobiDB-lite"/>
    </source>
</evidence>
<evidence type="ECO:0000269" key="3">
    <source>
    </source>
</evidence>
<evidence type="ECO:0000269" key="4">
    <source>
    </source>
</evidence>
<evidence type="ECO:0000269" key="5">
    <source>
    </source>
</evidence>
<evidence type="ECO:0000269" key="6">
    <source>
    </source>
</evidence>
<evidence type="ECO:0000303" key="7">
    <source>
    </source>
</evidence>
<evidence type="ECO:0000303" key="8">
    <source>
    </source>
</evidence>
<evidence type="ECO:0000305" key="9"/>
<evidence type="ECO:0000305" key="10">
    <source>
    </source>
</evidence>
<evidence type="ECO:0000312" key="11">
    <source>
        <dbReference type="Araport" id="AT1G25580"/>
    </source>
</evidence>
<evidence type="ECO:0000312" key="12">
    <source>
        <dbReference type="EMBL" id="AAG50527.1"/>
    </source>
</evidence>
<evidence type="ECO:0000312" key="13">
    <source>
        <dbReference type="EMBL" id="AAG50802.1"/>
    </source>
</evidence>
<sequence>MAGRSWLIDSNRIATKIMSASASSDPRQVVWKSNPSRHCPKCQHVIDNSDVVDDWPGLPRGVKFDPSDPEIIWHLLAKSGLSGLSSHPFIDEFIPTVNQDDGICYTHPKNLPGVKSDGTVSHFFHKAIKAYSTGTRKRRKIHDDDFGDVRWHKTGRTKPVVLDGVQRGCKKIMVLYGGKAVKTNWVMHQYHLGIEEDEKEGDYVVSKIFYQQPQQLVVKRGDKAEQEVSEDIFAAVTPTADPVTPKLATPEPRNAVRICSDSHIASDYVTPSDYVSAHEVSLAETSEVMCMEDEVQSIQPNHERPSSGPELEHGLENGAKEMLDDKEEQEKDRDNENQGEEDPTWFDSGSQFILNSQQLVEALSLCDDLLGSQDREENTNSGSLKDKQPCIADYAHLGPEDFKRDLEECQKIVLDPSNIELDTPPEFRLSQLEFGSQDSFLAWGTGKTD</sequence>
<protein>
    <recommendedName>
        <fullName evidence="8">SUPPRESSOR OF GAMMA RESPONSE 1</fullName>
    </recommendedName>
    <alternativeName>
        <fullName evidence="7">NAC domain-containing protein 8</fullName>
        <shortName evidence="7">ANAC008</shortName>
    </alternativeName>
    <alternativeName>
        <fullName>Protein SOG1</fullName>
    </alternativeName>
    <alternativeName>
        <fullName>SUPPRESSOR OF GAMMA RADIATION 1</fullName>
    </alternativeName>
</protein>
<name>NAC8_ARATH</name>
<proteinExistence type="evidence at protein level"/>
<reference key="1">
    <citation type="journal article" date="2000" name="Nature">
        <title>Sequence and analysis of chromosome 1 of the plant Arabidopsis thaliana.</title>
        <authorList>
            <person name="Theologis A."/>
            <person name="Ecker J.R."/>
            <person name="Palm C.J."/>
            <person name="Federspiel N.A."/>
            <person name="Kaul S."/>
            <person name="White O."/>
            <person name="Alonso J."/>
            <person name="Altafi H."/>
            <person name="Araujo R."/>
            <person name="Bowman C.L."/>
            <person name="Brooks S.Y."/>
            <person name="Buehler E."/>
            <person name="Chan A."/>
            <person name="Chao Q."/>
            <person name="Chen H."/>
            <person name="Cheuk R.F."/>
            <person name="Chin C.W."/>
            <person name="Chung M.K."/>
            <person name="Conn L."/>
            <person name="Conway A.B."/>
            <person name="Conway A.R."/>
            <person name="Creasy T.H."/>
            <person name="Dewar K."/>
            <person name="Dunn P."/>
            <person name="Etgu P."/>
            <person name="Feldblyum T.V."/>
            <person name="Feng J.-D."/>
            <person name="Fong B."/>
            <person name="Fujii C.Y."/>
            <person name="Gill J.E."/>
            <person name="Goldsmith A.D."/>
            <person name="Haas B."/>
            <person name="Hansen N.F."/>
            <person name="Hughes B."/>
            <person name="Huizar L."/>
            <person name="Hunter J.L."/>
            <person name="Jenkins J."/>
            <person name="Johnson-Hopson C."/>
            <person name="Khan S."/>
            <person name="Khaykin E."/>
            <person name="Kim C.J."/>
            <person name="Koo H.L."/>
            <person name="Kremenetskaia I."/>
            <person name="Kurtz D.B."/>
            <person name="Kwan A."/>
            <person name="Lam B."/>
            <person name="Langin-Hooper S."/>
            <person name="Lee A."/>
            <person name="Lee J.M."/>
            <person name="Lenz C.A."/>
            <person name="Li J.H."/>
            <person name="Li Y.-P."/>
            <person name="Lin X."/>
            <person name="Liu S.X."/>
            <person name="Liu Z.A."/>
            <person name="Luros J.S."/>
            <person name="Maiti R."/>
            <person name="Marziali A."/>
            <person name="Militscher J."/>
            <person name="Miranda M."/>
            <person name="Nguyen M."/>
            <person name="Nierman W.C."/>
            <person name="Osborne B.I."/>
            <person name="Pai G."/>
            <person name="Peterson J."/>
            <person name="Pham P.K."/>
            <person name="Rizzo M."/>
            <person name="Rooney T."/>
            <person name="Rowley D."/>
            <person name="Sakano H."/>
            <person name="Salzberg S.L."/>
            <person name="Schwartz J.R."/>
            <person name="Shinn P."/>
            <person name="Southwick A.M."/>
            <person name="Sun H."/>
            <person name="Tallon L.J."/>
            <person name="Tambunga G."/>
            <person name="Toriumi M.J."/>
            <person name="Town C.D."/>
            <person name="Utterback T."/>
            <person name="Van Aken S."/>
            <person name="Vaysberg M."/>
            <person name="Vysotskaia V.S."/>
            <person name="Walker M."/>
            <person name="Wu D."/>
            <person name="Yu G."/>
            <person name="Fraser C.M."/>
            <person name="Venter J.C."/>
            <person name="Davis R.W."/>
        </authorList>
    </citation>
    <scope>NUCLEOTIDE SEQUENCE [LARGE SCALE GENOMIC DNA]</scope>
    <source>
        <strain>cv. Columbia</strain>
    </source>
</reference>
<reference key="2">
    <citation type="journal article" date="2017" name="Plant J.">
        <title>Araport11: a complete reannotation of the Arabidopsis thaliana reference genome.</title>
        <authorList>
            <person name="Cheng C.Y."/>
            <person name="Krishnakumar V."/>
            <person name="Chan A.P."/>
            <person name="Thibaud-Nissen F."/>
            <person name="Schobel S."/>
            <person name="Town C.D."/>
        </authorList>
    </citation>
    <scope>GENOME REANNOTATION</scope>
    <source>
        <strain>cv. Columbia</strain>
    </source>
</reference>
<reference key="3">
    <citation type="journal article" date="2003" name="Science">
        <title>Empirical analysis of transcriptional activity in the Arabidopsis genome.</title>
        <authorList>
            <person name="Yamada K."/>
            <person name="Lim J."/>
            <person name="Dale J.M."/>
            <person name="Chen H."/>
            <person name="Shinn P."/>
            <person name="Palm C.J."/>
            <person name="Southwick A.M."/>
            <person name="Wu H.C."/>
            <person name="Kim C.J."/>
            <person name="Nguyen M."/>
            <person name="Pham P.K."/>
            <person name="Cheuk R.F."/>
            <person name="Karlin-Newmann G."/>
            <person name="Liu S.X."/>
            <person name="Lam B."/>
            <person name="Sakano H."/>
            <person name="Wu T."/>
            <person name="Yu G."/>
            <person name="Miranda M."/>
            <person name="Quach H.L."/>
            <person name="Tripp M."/>
            <person name="Chang C.H."/>
            <person name="Lee J.M."/>
            <person name="Toriumi M.J."/>
            <person name="Chan M.M."/>
            <person name="Tang C.C."/>
            <person name="Onodera C.S."/>
            <person name="Deng J.M."/>
            <person name="Akiyama K."/>
            <person name="Ansari Y."/>
            <person name="Arakawa T."/>
            <person name="Banh J."/>
            <person name="Banno F."/>
            <person name="Bowser L."/>
            <person name="Brooks S.Y."/>
            <person name="Carninci P."/>
            <person name="Chao Q."/>
            <person name="Choy N."/>
            <person name="Enju A."/>
            <person name="Goldsmith A.D."/>
            <person name="Gurjal M."/>
            <person name="Hansen N.F."/>
            <person name="Hayashizaki Y."/>
            <person name="Johnson-Hopson C."/>
            <person name="Hsuan V.W."/>
            <person name="Iida K."/>
            <person name="Karnes M."/>
            <person name="Khan S."/>
            <person name="Koesema E."/>
            <person name="Ishida J."/>
            <person name="Jiang P.X."/>
            <person name="Jones T."/>
            <person name="Kawai J."/>
            <person name="Kamiya A."/>
            <person name="Meyers C."/>
            <person name="Nakajima M."/>
            <person name="Narusaka M."/>
            <person name="Seki M."/>
            <person name="Sakurai T."/>
            <person name="Satou M."/>
            <person name="Tamse R."/>
            <person name="Vaysberg M."/>
            <person name="Wallender E.K."/>
            <person name="Wong C."/>
            <person name="Yamamura Y."/>
            <person name="Yuan S."/>
            <person name="Shinozaki K."/>
            <person name="Davis R.W."/>
            <person name="Theologis A."/>
            <person name="Ecker J.R."/>
        </authorList>
    </citation>
    <scope>NUCLEOTIDE SEQUENCE [LARGE SCALE MRNA]</scope>
    <source>
        <strain>cv. Columbia</strain>
    </source>
</reference>
<reference key="4">
    <citation type="submission" date="2006-07" db="EMBL/GenBank/DDBJ databases">
        <title>Large-scale analysis of RIKEN Arabidopsis full-length (RAFL) cDNAs.</title>
        <authorList>
            <person name="Totoki Y."/>
            <person name="Seki M."/>
            <person name="Ishida J."/>
            <person name="Nakajima M."/>
            <person name="Enju A."/>
            <person name="Kamiya A."/>
            <person name="Narusaka M."/>
            <person name="Shin-i T."/>
            <person name="Nakagawa M."/>
            <person name="Sakamoto N."/>
            <person name="Oishi K."/>
            <person name="Kohara Y."/>
            <person name="Kobayashi M."/>
            <person name="Toyoda A."/>
            <person name="Sakaki Y."/>
            <person name="Sakurai T."/>
            <person name="Iida K."/>
            <person name="Akiyama K."/>
            <person name="Satou M."/>
            <person name="Toyoda T."/>
            <person name="Konagaya A."/>
            <person name="Carninci P."/>
            <person name="Kawai J."/>
            <person name="Hayashizaki Y."/>
            <person name="Shinozaki K."/>
        </authorList>
    </citation>
    <scope>NUCLEOTIDE SEQUENCE [LARGE SCALE MRNA]</scope>
    <source>
        <strain>cv. Columbia</strain>
    </source>
</reference>
<reference key="5">
    <citation type="journal article" date="2003" name="DNA Res.">
        <title>Comprehensive analysis of NAC family genes in Oryza sativa and Arabidopsis thaliana.</title>
        <authorList>
            <person name="Ooka H."/>
            <person name="Satoh K."/>
            <person name="Doi K."/>
            <person name="Nagata T."/>
            <person name="Otomo Y."/>
            <person name="Murakami K."/>
            <person name="Matsubara K."/>
            <person name="Osato N."/>
            <person name="Kawai J."/>
            <person name="Carninci P."/>
            <person name="Hayashizaki Y."/>
            <person name="Suzuki K."/>
            <person name="Kojima K."/>
            <person name="Takahara Y."/>
            <person name="Yamamoto K."/>
            <person name="Kikuchi S."/>
        </authorList>
    </citation>
    <scope>GENE FAMILY</scope>
    <scope>NOMENCLATURE</scope>
</reference>
<reference key="6">
    <citation type="journal article" date="2009" name="Proc. Natl. Acad. Sci. U.S.A.">
        <title>Suppressor of gamma response 1 (SOG1) encodes a putative transcription factor governing multiple responses to DNA damage.</title>
        <authorList>
            <person name="Yoshiyama K."/>
            <person name="Conklin P.A."/>
            <person name="Huefner N.D."/>
            <person name="Britt A.B."/>
        </authorList>
    </citation>
    <scope>FUNCTION</scope>
    <scope>MUTAGENESIS OF GLY-155</scope>
</reference>
<reference key="7">
    <citation type="journal article" date="2010" name="DNA Repair">
        <title>A shared DNA-damage-response pathway for induction of stem-cell death by UVB and by gamma irradiation.</title>
        <authorList>
            <person name="Furukawa T."/>
            <person name="Curtis M.J."/>
            <person name="Tominey C.M."/>
            <person name="Duong Y.H."/>
            <person name="Wilcox B.W."/>
            <person name="Aggoune D."/>
            <person name="Hays J.B."/>
            <person name="Britt A.B."/>
        </authorList>
    </citation>
    <scope>FUNCTION</scope>
</reference>
<reference key="8">
    <citation type="journal article" date="2013" name="EMBO Rep.">
        <title>ATM-mediated phosphorylation of SOG1 is essential for the DNA damage response in Arabidopsis.</title>
        <authorList>
            <person name="Yoshiyama K.O."/>
            <person name="Kobayashi J."/>
            <person name="Ogita N."/>
            <person name="Ueda M."/>
            <person name="Kimura S."/>
            <person name="Maki H."/>
            <person name="Umeda M."/>
        </authorList>
    </citation>
    <scope>TISSUE SPECIFICITY</scope>
    <scope>SUBCELLULAR LOCATION</scope>
    <scope>LACK OF INDUCTION BY ZEOCIN</scope>
    <scope>PHOSPHORYLATION</scope>
    <scope>MUTAGENESIS OF SER-350; SER-356; SER-372; SER-430 AND SER-436</scope>
</reference>
<reference key="9">
    <citation type="journal article" date="2014" name="Plant Cell">
        <title>The Arabidopsis SIAMESE-RELATED cyclin-dependent kinase inhibitors SMR5 and SMR7 regulate the DNA damage checkpoint in response to reactive oxygen species.</title>
        <authorList>
            <person name="Yi D."/>
            <person name="Alvim Kamei C.L."/>
            <person name="Cools T."/>
            <person name="Vanderauwera S."/>
            <person name="Takahashi N."/>
            <person name="Okushima Y."/>
            <person name="Eekhout T."/>
            <person name="Yoshiyama K.O."/>
            <person name="Larkin J."/>
            <person name="Van den Daele H."/>
            <person name="Conklin P."/>
            <person name="Britt A."/>
            <person name="Umeda M."/>
            <person name="De Veylder L."/>
        </authorList>
    </citation>
    <scope>FUNCTION</scope>
    <scope>PHOSPHORYLATION</scope>
</reference>
<reference key="10">
    <citation type="journal article" date="2014" name="Plant Signal. Behav.">
        <title>The role of SOG1, a plant-specific transcriptional regulator, in the DNA damage response.</title>
        <authorList>
            <person name="Yoshiyama K.O."/>
            <person name="Kimura S."/>
            <person name="Maki H."/>
            <person name="Britt A.B."/>
            <person name="Umeda M."/>
        </authorList>
    </citation>
    <scope>REVIEW</scope>
</reference>
<reference key="11">
    <citation type="journal article" date="2016" name="Genes Cells">
        <title>DNA damage inhibits lateral root formation by up-regulating cytokinin biosynthesis genes in Arabidopsis thaliana.</title>
        <authorList>
            <person name="Davis O.M."/>
            <person name="Ogita N."/>
            <person name="Inagaki S."/>
            <person name="Takahashi N."/>
            <person name="Umeda M."/>
        </authorList>
    </citation>
    <scope>FUNCTION</scope>
</reference>
<comment type="function">
    <text evidence="3 4 6 10">Transcription factor regulating the transcriptional activation response to gamma irradiation (PubMed:19549833). Required for stem-cell death induced by UVB or by gamma irradiation (PubMed:20634150). Not required for ATM activation, but participates in pathways governed by both ATM and ATR sensor kinases (PubMed:19549833). Involved in DNA damage response (DDR) system that regulates cell cycle arrest (PubMed:24399300). Functional homolog of animal p53 (PubMed:24736489). Regulates SMR5 and SMR7 transcription (PubMed:24399300). Regulates DNA repair and cytokinin signaling separately and plays a key role in controlling lateral root formation under genotoxic stress.</text>
</comment>
<comment type="subcellular location">
    <subcellularLocation>
        <location evidence="5">Nucleus</location>
    </subcellularLocation>
</comment>
<comment type="tissue specificity">
    <text evidence="5">Expressed in shoot and root apical meristems, in lateral root primordia, in the vasculature of young leaves and in the root stele.</text>
</comment>
<comment type="induction">
    <text evidence="5">Not induced by zeocin or ionizing radiation treatment.</text>
</comment>
<comment type="domain">
    <text>The NAC domain includes a DNA-binding domain and a dimerization domain.</text>
</comment>
<comment type="PTM">
    <text evidence="5 6">Phosphorylated in a DNA stress-independent manner (PubMed:23907539, PubMed:24399300). Hyperphosphorylated on SQ motifs upon double-strand breaks, H(2)O(2) or zeocin treatments (PubMed:23907539, PubMed:24399300). Hyperphosphorylation is required for SOG1 function, and unlike constitutive phosphorylation, is ATM dependent (PubMed:23907539).</text>
</comment>
<comment type="sequence caution" evidence="9">
    <conflict type="erroneous gene model prediction">
        <sequence resource="EMBL-CDS" id="AAG50527"/>
    </conflict>
</comment>
<comment type="sequence caution" evidence="9">
    <conflict type="erroneous gene model prediction">
        <sequence resource="EMBL-CDS" id="AAG50802"/>
    </conflict>
</comment>
<keyword id="KW-0238">DNA-binding</keyword>
<keyword id="KW-0539">Nucleus</keyword>
<keyword id="KW-0597">Phosphoprotein</keyword>
<keyword id="KW-1185">Reference proteome</keyword>
<keyword id="KW-0804">Transcription</keyword>
<keyword id="KW-0805">Transcription regulation</keyword>